<reference key="1">
    <citation type="journal article" date="2003" name="Proc. Natl. Acad. Sci. U.S.A.">
        <title>The genome sequence of Blochmannia floridanus: comparative analysis of reduced genomes.</title>
        <authorList>
            <person name="Gil R."/>
            <person name="Silva F.J."/>
            <person name="Zientz E."/>
            <person name="Delmotte F."/>
            <person name="Gonzalez-Candelas F."/>
            <person name="Latorre A."/>
            <person name="Rausell C."/>
            <person name="Kamerbeek J."/>
            <person name="Gadau J."/>
            <person name="Hoelldobler B."/>
            <person name="van Ham R.C.H.J."/>
            <person name="Gross R."/>
            <person name="Moya A."/>
        </authorList>
    </citation>
    <scope>NUCLEOTIDE SEQUENCE [LARGE SCALE GENOMIC DNA]</scope>
</reference>
<name>ATPF_BLOFL</name>
<accession>Q7VQW0</accession>
<gene>
    <name evidence="1" type="primary">atpF</name>
    <name type="ordered locus">Bfl004</name>
</gene>
<sequence length="161" mass="19079">MYLNATILGQVIAFILFVWFCMKYVWNPLMSVIEERQKKIIDSLESIKTSKMESERIRNEALACLKQAHIKSEEIIKYAYECKMQILHTAQNEAYQERDKILSQTQIQIDQERERIISELRNHVSKLVIESTEKVIDTSINKIIDYDFVDKIIKQLSNYED</sequence>
<organism>
    <name type="scientific">Blochmanniella floridana</name>
    <dbReference type="NCBI Taxonomy" id="203907"/>
    <lineage>
        <taxon>Bacteria</taxon>
        <taxon>Pseudomonadati</taxon>
        <taxon>Pseudomonadota</taxon>
        <taxon>Gammaproteobacteria</taxon>
        <taxon>Enterobacterales</taxon>
        <taxon>Enterobacteriaceae</taxon>
        <taxon>ant endosymbionts</taxon>
        <taxon>Candidatus Blochmanniella</taxon>
    </lineage>
</organism>
<protein>
    <recommendedName>
        <fullName evidence="1">ATP synthase subunit b</fullName>
    </recommendedName>
    <alternativeName>
        <fullName evidence="1">ATP synthase F(0) sector subunit b</fullName>
    </alternativeName>
    <alternativeName>
        <fullName evidence="1">ATPase subunit I</fullName>
    </alternativeName>
    <alternativeName>
        <fullName evidence="1">F-type ATPase subunit b</fullName>
        <shortName evidence="1">F-ATPase subunit b</shortName>
    </alternativeName>
</protein>
<proteinExistence type="inferred from homology"/>
<comment type="function">
    <text evidence="1">F(1)F(0) ATP synthase produces ATP from ADP in the presence of a proton or sodium gradient. F-type ATPases consist of two structural domains, F(1) containing the extramembraneous catalytic core and F(0) containing the membrane proton channel, linked together by a central stalk and a peripheral stalk. During catalysis, ATP synthesis in the catalytic domain of F(1) is coupled via a rotary mechanism of the central stalk subunits to proton translocation.</text>
</comment>
<comment type="function">
    <text evidence="1">Component of the F(0) channel, it forms part of the peripheral stalk, linking F(1) to F(0).</text>
</comment>
<comment type="subunit">
    <text evidence="1">F-type ATPases have 2 components, F(1) - the catalytic core - and F(0) - the membrane proton channel. F(1) has five subunits: alpha(3), beta(3), gamma(1), delta(1), epsilon(1). F(0) has three main subunits: a(1), b(2) and c(10-14). The alpha and beta chains form an alternating ring which encloses part of the gamma chain. F(1) is attached to F(0) by a central stalk formed by the gamma and epsilon chains, while a peripheral stalk is formed by the delta and b chains.</text>
</comment>
<comment type="subcellular location">
    <subcellularLocation>
        <location evidence="1">Cell inner membrane</location>
        <topology evidence="1">Single-pass membrane protein</topology>
    </subcellularLocation>
</comment>
<comment type="similarity">
    <text evidence="1">Belongs to the ATPase B chain family.</text>
</comment>
<feature type="chain" id="PRO_0000368355" description="ATP synthase subunit b">
    <location>
        <begin position="1"/>
        <end position="161"/>
    </location>
</feature>
<feature type="transmembrane region" description="Helical" evidence="1">
    <location>
        <begin position="1"/>
        <end position="21"/>
    </location>
</feature>
<dbReference type="EMBL" id="BX248583">
    <property type="protein sequence ID" value="CAD83532.1"/>
    <property type="molecule type" value="Genomic_DNA"/>
</dbReference>
<dbReference type="SMR" id="Q7VQW0"/>
<dbReference type="STRING" id="203907.Bfl004"/>
<dbReference type="KEGG" id="bfl:Bfl004"/>
<dbReference type="eggNOG" id="COG0711">
    <property type="taxonomic scope" value="Bacteria"/>
</dbReference>
<dbReference type="HOGENOM" id="CLU_079215_4_5_6"/>
<dbReference type="OrthoDB" id="9788020at2"/>
<dbReference type="Proteomes" id="UP000002192">
    <property type="component" value="Chromosome"/>
</dbReference>
<dbReference type="GO" id="GO:0005886">
    <property type="term" value="C:plasma membrane"/>
    <property type="evidence" value="ECO:0007669"/>
    <property type="project" value="UniProtKB-SubCell"/>
</dbReference>
<dbReference type="GO" id="GO:0045259">
    <property type="term" value="C:proton-transporting ATP synthase complex"/>
    <property type="evidence" value="ECO:0007669"/>
    <property type="project" value="UniProtKB-KW"/>
</dbReference>
<dbReference type="GO" id="GO:0046933">
    <property type="term" value="F:proton-transporting ATP synthase activity, rotational mechanism"/>
    <property type="evidence" value="ECO:0007669"/>
    <property type="project" value="UniProtKB-UniRule"/>
</dbReference>
<dbReference type="GO" id="GO:0046961">
    <property type="term" value="F:proton-transporting ATPase activity, rotational mechanism"/>
    <property type="evidence" value="ECO:0007669"/>
    <property type="project" value="TreeGrafter"/>
</dbReference>
<dbReference type="CDD" id="cd06503">
    <property type="entry name" value="ATP-synt_Fo_b"/>
    <property type="match status" value="1"/>
</dbReference>
<dbReference type="Gene3D" id="1.20.5.620">
    <property type="entry name" value="F1F0 ATP synthase subunit B, membrane domain"/>
    <property type="match status" value="1"/>
</dbReference>
<dbReference type="HAMAP" id="MF_01398">
    <property type="entry name" value="ATP_synth_b_bprime"/>
    <property type="match status" value="1"/>
</dbReference>
<dbReference type="InterPro" id="IPR028987">
    <property type="entry name" value="ATP_synth_B-like_membr_sf"/>
</dbReference>
<dbReference type="InterPro" id="IPR002146">
    <property type="entry name" value="ATP_synth_b/b'su_bac/chlpt"/>
</dbReference>
<dbReference type="InterPro" id="IPR005864">
    <property type="entry name" value="ATP_synth_F0_bsu_bac"/>
</dbReference>
<dbReference type="InterPro" id="IPR050059">
    <property type="entry name" value="ATP_synthase_B_chain"/>
</dbReference>
<dbReference type="NCBIfam" id="TIGR01144">
    <property type="entry name" value="ATP_synt_b"/>
    <property type="match status" value="1"/>
</dbReference>
<dbReference type="NCBIfam" id="NF004411">
    <property type="entry name" value="PRK05759.1-2"/>
    <property type="match status" value="1"/>
</dbReference>
<dbReference type="NCBIfam" id="NF004413">
    <property type="entry name" value="PRK05759.1-4"/>
    <property type="match status" value="1"/>
</dbReference>
<dbReference type="PANTHER" id="PTHR33445:SF1">
    <property type="entry name" value="ATP SYNTHASE SUBUNIT B"/>
    <property type="match status" value="1"/>
</dbReference>
<dbReference type="PANTHER" id="PTHR33445">
    <property type="entry name" value="ATP SYNTHASE SUBUNIT B', CHLOROPLASTIC"/>
    <property type="match status" value="1"/>
</dbReference>
<dbReference type="Pfam" id="PF00430">
    <property type="entry name" value="ATP-synt_B"/>
    <property type="match status" value="1"/>
</dbReference>
<dbReference type="SUPFAM" id="SSF81573">
    <property type="entry name" value="F1F0 ATP synthase subunit B, membrane domain"/>
    <property type="match status" value="1"/>
</dbReference>
<evidence type="ECO:0000255" key="1">
    <source>
        <dbReference type="HAMAP-Rule" id="MF_01398"/>
    </source>
</evidence>
<keyword id="KW-0066">ATP synthesis</keyword>
<keyword id="KW-0997">Cell inner membrane</keyword>
<keyword id="KW-1003">Cell membrane</keyword>
<keyword id="KW-0138">CF(0)</keyword>
<keyword id="KW-0375">Hydrogen ion transport</keyword>
<keyword id="KW-0406">Ion transport</keyword>
<keyword id="KW-0472">Membrane</keyword>
<keyword id="KW-1185">Reference proteome</keyword>
<keyword id="KW-0812">Transmembrane</keyword>
<keyword id="KW-1133">Transmembrane helix</keyword>
<keyword id="KW-0813">Transport</keyword>